<accession>Q86TI0</accession>
<accession>B7Z3D9</accession>
<accession>E9PGH8</accession>
<accession>Q96K82</accession>
<accession>Q9UPP4</accession>
<comment type="function">
    <text evidence="1">May act as a GTPase-activating protein for Rab family protein(s). May play a role in the cell cycle and differentiation of various tissues. Involved in the trafficking and translocation of GLUT4-containing vesicles and insulin-stimulated glucose uptake into cells (By similarity).</text>
</comment>
<comment type="subunit">
    <text evidence="10">Interacts with APPL2 (via BAR domain); interaction is dependent of TBC1D1 phosphorylation at Ser-235; interaction diminishes the phosphorylation of TBC1D1 at Thr-596, resulting in inhibition of SLC2A4/GLUT4 translocation and glucose uptake.</text>
</comment>
<comment type="interaction">
    <interactant intactId="EBI-1644036">
        <id>Q86TI0</id>
    </interactant>
    <interactant intactId="EBI-741261">
        <id>Q8NEU8</id>
        <label>APPL2</label>
    </interactant>
    <organismsDiffer>false</organismsDiffer>
    <experiments>4</experiments>
</comment>
<comment type="interaction">
    <interactant intactId="EBI-1644036">
        <id>Q86TI0</id>
    </interactant>
    <interactant intactId="EBI-740814">
        <id>Q8N715</id>
        <label>CCDC185</label>
    </interactant>
    <organismsDiffer>false</organismsDiffer>
    <experiments>3</experiments>
</comment>
<comment type="interaction">
    <interactant intactId="EBI-1644036">
        <id>Q86TI0</id>
    </interactant>
    <interactant intactId="EBI-5453285">
        <id>Q2TBE0</id>
        <label>CWF19L2</label>
    </interactant>
    <organismsDiffer>false</organismsDiffer>
    <experiments>3</experiments>
</comment>
<comment type="interaction">
    <interactant intactId="EBI-1644036">
        <id>Q86TI0</id>
    </interactant>
    <interactant intactId="EBI-2349927">
        <id>Q5JST6</id>
        <label>EFHC2</label>
    </interactant>
    <organismsDiffer>false</organismsDiffer>
    <experiments>3</experiments>
</comment>
<comment type="interaction">
    <interactant intactId="EBI-1644036">
        <id>Q86TI0</id>
    </interactant>
    <interactant intactId="EBI-719941">
        <id>Q3B820</id>
        <label>FAM161A</label>
    </interactant>
    <organismsDiffer>false</organismsDiffer>
    <experiments>3</experiments>
</comment>
<comment type="interaction">
    <interactant intactId="EBI-1644036">
        <id>Q86TI0</id>
    </interactant>
    <interactant intactId="EBI-742802">
        <id>Q9Y247</id>
        <label>FAM50B</label>
    </interactant>
    <organismsDiffer>false</organismsDiffer>
    <experiments>3</experiments>
</comment>
<comment type="interaction">
    <interactant intactId="EBI-1644036">
        <id>Q86TI0</id>
    </interactant>
    <interactant intactId="EBI-2548508">
        <id>Q96IK5</id>
        <label>GMCL1</label>
    </interactant>
    <organismsDiffer>false</organismsDiffer>
    <experiments>3</experiments>
</comment>
<comment type="interaction">
    <interactant intactId="EBI-1644036">
        <id>Q86TI0</id>
    </interactant>
    <interactant intactId="EBI-1752118">
        <id>P31273</id>
        <label>HOXC8</label>
    </interactant>
    <organismsDiffer>false</organismsDiffer>
    <experiments>3</experiments>
</comment>
<comment type="interaction">
    <interactant intactId="EBI-1644036">
        <id>Q86TI0</id>
    </interactant>
    <interactant intactId="EBI-7116203">
        <id>O75031</id>
        <label>HSF2BP</label>
    </interactant>
    <organismsDiffer>false</organismsDiffer>
    <experiments>3</experiments>
</comment>
<comment type="interaction">
    <interactant intactId="EBI-1644036">
        <id>Q86TI0</id>
    </interactant>
    <interactant intactId="EBI-2949715">
        <id>O95678</id>
        <label>KRT75</label>
    </interactant>
    <organismsDiffer>false</organismsDiffer>
    <experiments>3</experiments>
</comment>
<comment type="interaction">
    <interactant intactId="EBI-1644036">
        <id>Q86TI0</id>
    </interactant>
    <interactant intactId="EBI-11985629">
        <id>Q96JM7-2</id>
        <label>L3MBTL3</label>
    </interactant>
    <organismsDiffer>false</organismsDiffer>
    <experiments>3</experiments>
</comment>
<comment type="interaction">
    <interactant intactId="EBI-1644036">
        <id>Q86TI0</id>
    </interactant>
    <interactant intactId="EBI-8474075">
        <id>Q68G74</id>
        <label>LHX8</label>
    </interactant>
    <organismsDiffer>false</organismsDiffer>
    <experiments>3</experiments>
</comment>
<comment type="interaction">
    <interactant intactId="EBI-1644036">
        <id>Q86TI0</id>
    </interactant>
    <interactant intactId="EBI-739832">
        <id>Q8TBB1</id>
        <label>LNX1</label>
    </interactant>
    <organismsDiffer>false</organismsDiffer>
    <experiments>3</experiments>
</comment>
<comment type="interaction">
    <interactant intactId="EBI-1644036">
        <id>Q86TI0</id>
    </interactant>
    <interactant intactId="EBI-1216080">
        <id>Q9Y250</id>
        <label>LZTS1</label>
    </interactant>
    <organismsDiffer>false</organismsDiffer>
    <experiments>3</experiments>
</comment>
<comment type="interaction">
    <interactant intactId="EBI-1644036">
        <id>Q86TI0</id>
    </interactant>
    <interactant intactId="EBI-348259">
        <id>Q96EZ8</id>
        <label>MCRS1</label>
    </interactant>
    <organismsDiffer>false</organismsDiffer>
    <experiments>3</experiments>
</comment>
<comment type="interaction">
    <interactant intactId="EBI-1644036">
        <id>Q86TI0</id>
    </interactant>
    <interactant intactId="EBI-1045072">
        <id>Q96T60</id>
        <label>PNKP</label>
    </interactant>
    <organismsDiffer>false</organismsDiffer>
    <experiments>3</experiments>
</comment>
<comment type="interaction">
    <interactant intactId="EBI-1644036">
        <id>Q86TI0</id>
    </interactant>
    <interactant intactId="EBI-366017">
        <id>Q13671</id>
        <label>RIN1</label>
    </interactant>
    <organismsDiffer>false</organismsDiffer>
    <experiments>3</experiments>
</comment>
<comment type="interaction">
    <interactant intactId="EBI-1644036">
        <id>Q86TI0</id>
    </interactant>
    <interactant intactId="EBI-747142">
        <id>Q96C24</id>
        <label>SYTL4</label>
    </interactant>
    <organismsDiffer>false</organismsDiffer>
    <experiments>3</experiments>
</comment>
<comment type="interaction">
    <interactant intactId="EBI-1644036">
        <id>Q86TI0</id>
    </interactant>
    <interactant intactId="EBI-710310">
        <id>Q15560</id>
        <label>TCEA2</label>
    </interactant>
    <organismsDiffer>false</organismsDiffer>
    <experiments>3</experiments>
</comment>
<comment type="interaction">
    <interactant intactId="EBI-1644036">
        <id>Q86TI0</id>
    </interactant>
    <interactant intactId="EBI-10249681">
        <id>P02585</id>
        <label>TNNC2</label>
    </interactant>
    <organismsDiffer>false</organismsDiffer>
    <experiments>3</experiments>
</comment>
<comment type="interaction">
    <interactant intactId="EBI-1644036">
        <id>Q86TI0</id>
    </interactant>
    <interactant intactId="EBI-10241197">
        <id>Q3SY00</id>
        <label>TSGA10IP</label>
    </interactant>
    <organismsDiffer>false</organismsDiffer>
    <experiments>3</experiments>
</comment>
<comment type="interaction">
    <interactant intactId="EBI-1644036">
        <id>Q86TI0</id>
    </interactant>
    <interactant intactId="EBI-359793">
        <id>P40222</id>
        <label>TXLNA</label>
    </interactant>
    <organismsDiffer>false</organismsDiffer>
    <experiments>3</experiments>
</comment>
<comment type="interaction">
    <interactant intactId="EBI-1644036">
        <id>Q86TI0</id>
    </interactant>
    <interactant intactId="EBI-2799833">
        <id>Q8N1B4</id>
        <label>VPS52</label>
    </interactant>
    <organismsDiffer>false</organismsDiffer>
    <experiments>3</experiments>
</comment>
<comment type="interaction">
    <interactant intactId="EBI-1644036">
        <id>Q86TI0</id>
    </interactant>
    <interactant intactId="EBI-2555749">
        <id>Q6P2D0</id>
        <label>ZFP1</label>
    </interactant>
    <organismsDiffer>false</organismsDiffer>
    <experiments>3</experiments>
</comment>
<comment type="subcellular location">
    <subcellularLocation>
        <location evidence="1">Nucleus</location>
    </subcellularLocation>
</comment>
<comment type="alternative products">
    <event type="alternative splicing"/>
    <isoform>
        <id>Q86TI0-1</id>
        <name>1</name>
        <sequence type="displayed"/>
    </isoform>
    <isoform>
        <id>Q86TI0-2</id>
        <name>2</name>
        <sequence type="described" ref="VSP_044749 VSP_044750"/>
    </isoform>
</comment>
<comment type="PTM">
    <text evidence="1">Insulin-stimulated phosphorylation by AKT family kinases stimulates SLC2A4/GLUT4 translocation.</text>
</comment>
<comment type="sequence caution" evidence="12">
    <conflict type="erroneous initiation">
        <sequence resource="EMBL-CDS" id="BAB55057"/>
    </conflict>
</comment>
<organism>
    <name type="scientific">Homo sapiens</name>
    <name type="common">Human</name>
    <dbReference type="NCBI Taxonomy" id="9606"/>
    <lineage>
        <taxon>Eukaryota</taxon>
        <taxon>Metazoa</taxon>
        <taxon>Chordata</taxon>
        <taxon>Craniata</taxon>
        <taxon>Vertebrata</taxon>
        <taxon>Euteleostomi</taxon>
        <taxon>Mammalia</taxon>
        <taxon>Eutheria</taxon>
        <taxon>Euarchontoglires</taxon>
        <taxon>Primates</taxon>
        <taxon>Haplorrhini</taxon>
        <taxon>Catarrhini</taxon>
        <taxon>Hominidae</taxon>
        <taxon>Homo</taxon>
    </lineage>
</organism>
<name>TBCD1_HUMAN</name>
<evidence type="ECO:0000250" key="1"/>
<evidence type="ECO:0000250" key="2">
    <source>
        <dbReference type="UniProtKB" id="Q60949"/>
    </source>
</evidence>
<evidence type="ECO:0000255" key="3">
    <source>
        <dbReference type="PROSITE-ProRule" id="PRU00148"/>
    </source>
</evidence>
<evidence type="ECO:0000255" key="4">
    <source>
        <dbReference type="PROSITE-ProRule" id="PRU00163"/>
    </source>
</evidence>
<evidence type="ECO:0000256" key="5">
    <source>
        <dbReference type="SAM" id="MobiDB-lite"/>
    </source>
</evidence>
<evidence type="ECO:0000269" key="6">
    <source>
    </source>
</evidence>
<evidence type="ECO:0000269" key="7">
    <source>
    </source>
</evidence>
<evidence type="ECO:0000269" key="8">
    <source>
    </source>
</evidence>
<evidence type="ECO:0000269" key="9">
    <source>
    </source>
</evidence>
<evidence type="ECO:0000269" key="10">
    <source>
    </source>
</evidence>
<evidence type="ECO:0000303" key="11">
    <source>
    </source>
</evidence>
<evidence type="ECO:0000305" key="12"/>
<evidence type="ECO:0007744" key="13">
    <source>
    </source>
</evidence>
<evidence type="ECO:0007744" key="14">
    <source>
    </source>
</evidence>
<evidence type="ECO:0007829" key="15">
    <source>
        <dbReference type="PDB" id="3QYE"/>
    </source>
</evidence>
<keyword id="KW-0002">3D-structure</keyword>
<keyword id="KW-0025">Alternative splicing</keyword>
<keyword id="KW-0343">GTPase activation</keyword>
<keyword id="KW-0539">Nucleus</keyword>
<keyword id="KW-0597">Phosphoprotein</keyword>
<keyword id="KW-1267">Proteomics identification</keyword>
<keyword id="KW-1185">Reference proteome</keyword>
<gene>
    <name type="primary">TBC1D1</name>
    <name type="synonym">KIAA1108</name>
</gene>
<feature type="chain" id="PRO_0000208022" description="TBC1 domain family member 1">
    <location>
        <begin position="1"/>
        <end position="1168"/>
    </location>
</feature>
<feature type="domain" description="PID" evidence="3">
    <location>
        <begin position="246"/>
        <end position="404"/>
    </location>
</feature>
<feature type="domain" description="Rab-GAP TBC" evidence="4">
    <location>
        <begin position="800"/>
        <end position="994"/>
    </location>
</feature>
<feature type="region of interest" description="Disordered" evidence="5">
    <location>
        <begin position="203"/>
        <end position="238"/>
    </location>
</feature>
<feature type="region of interest" description="Disordered" evidence="5">
    <location>
        <begin position="532"/>
        <end position="551"/>
    </location>
</feature>
<feature type="region of interest" description="Disordered" evidence="5">
    <location>
        <begin position="564"/>
        <end position="587"/>
    </location>
</feature>
<feature type="region of interest" description="Disordered" evidence="5">
    <location>
        <begin position="628"/>
        <end position="658"/>
    </location>
</feature>
<feature type="region of interest" description="Disordered" evidence="5">
    <location>
        <begin position="678"/>
        <end position="717"/>
    </location>
</feature>
<feature type="region of interest" description="Disordered" evidence="5">
    <location>
        <begin position="1145"/>
        <end position="1168"/>
    </location>
</feature>
<feature type="compositionally biased region" description="Low complexity" evidence="5">
    <location>
        <begin position="532"/>
        <end position="542"/>
    </location>
</feature>
<feature type="compositionally biased region" description="Basic and acidic residues" evidence="5">
    <location>
        <begin position="632"/>
        <end position="645"/>
    </location>
</feature>
<feature type="compositionally biased region" description="Basic and acidic residues" evidence="5">
    <location>
        <begin position="1145"/>
        <end position="1159"/>
    </location>
</feature>
<feature type="modified residue" description="Phosphoserine" evidence="2">
    <location>
        <position position="146"/>
    </location>
</feature>
<feature type="modified residue" description="Phosphoserine; by PKB/AKT1" evidence="10">
    <location>
        <position position="235"/>
    </location>
</feature>
<feature type="modified residue" description="Phosphoserine" evidence="14">
    <location>
        <position position="237"/>
    </location>
</feature>
<feature type="modified residue" description="Phosphoserine" evidence="2">
    <location>
        <position position="503"/>
    </location>
</feature>
<feature type="modified residue" description="Phosphothreonine; by PKB/AKT1" evidence="2">
    <location>
        <position position="505"/>
    </location>
</feature>
<feature type="modified residue" description="Phosphoserine" evidence="13">
    <location>
        <position position="507"/>
    </location>
</feature>
<feature type="modified residue" description="Phosphoserine" evidence="2">
    <location>
        <position position="525"/>
    </location>
</feature>
<feature type="modified residue" description="Phosphoserine" evidence="2">
    <location>
        <position position="527"/>
    </location>
</feature>
<feature type="modified residue" description="Phosphoserine" evidence="13">
    <location>
        <position position="565"/>
    </location>
</feature>
<feature type="modified residue" description="Phosphoserine" evidence="2">
    <location>
        <position position="566"/>
    </location>
</feature>
<feature type="modified residue" description="Phosphoserine" evidence="13">
    <location>
        <position position="570"/>
    </location>
</feature>
<feature type="modified residue" description="Phosphoserine" evidence="2">
    <location>
        <position position="571"/>
    </location>
</feature>
<feature type="modified residue" description="Phosphoserine" evidence="13 14">
    <location>
        <position position="585"/>
    </location>
</feature>
<feature type="modified residue" description="Phosphothreonine" evidence="10">
    <location>
        <position position="596"/>
    </location>
</feature>
<feature type="modified residue" description="Phosphoserine" evidence="2">
    <location>
        <position position="614"/>
    </location>
</feature>
<feature type="modified residue" description="Phosphoserine; by PKB/AKT1" evidence="2">
    <location>
        <position position="627"/>
    </location>
</feature>
<feature type="modified residue" description="Phosphoserine" evidence="2">
    <location>
        <position position="695"/>
    </location>
</feature>
<feature type="modified residue" description="Phosphoserine" evidence="2">
    <location>
        <position position="941"/>
    </location>
</feature>
<feature type="modified residue" description="Phosphotyrosine" evidence="2">
    <location>
        <position position="952"/>
    </location>
</feature>
<feature type="modified residue" description="Phosphothreonine" evidence="2">
    <location>
        <position position="1131"/>
    </location>
</feature>
<feature type="splice variant" id="VSP_044749" description="In isoform 2." evidence="11">
    <original>K</original>
    <variation>NVDPSPVGESKHRPGQSSAPAPPPRLNPSASSPNFFKYLKHNSSGEQSGNAVPKSISYRNALRKKLHSSSSVPNFLKFLAPVDENNTSDFMNTKR</variation>
    <location>
        <position position="637"/>
    </location>
</feature>
<feature type="splice variant" id="VSP_044750" description="In isoform 2." evidence="11">
    <location>
        <begin position="934"/>
        <end position="1036"/>
    </location>
</feature>
<feature type="sequence variant" id="VAR_028089" description="In dbSNP:rs2279027." evidence="6">
    <original>S</original>
    <variation>P</variation>
    <location>
        <position position="14"/>
    </location>
</feature>
<feature type="sequence variant" id="VAR_028090" description="In dbSNP:rs4008480.">
    <original>T</original>
    <variation>I</variation>
    <location>
        <position position="55"/>
    </location>
</feature>
<feature type="sequence variant" id="VAR_054392" description="May be associated with risk of familial obesity; dbSNP:rs35859249." evidence="7 8">
    <original>R</original>
    <variation>W</variation>
    <location>
        <position position="125"/>
    </location>
</feature>
<feature type="sequence variant" id="VAR_028091" description="In dbSNP:rs10501.">
    <original>V</original>
    <variation>G</variation>
    <location>
        <position position="228"/>
    </location>
</feature>
<feature type="sequence variant" id="VAR_028092" description="In dbSNP:rs7677030.">
    <original>Y</original>
    <variation>S</variation>
    <location>
        <position position="685"/>
    </location>
</feature>
<feature type="sequence variant" id="VAR_028093" description="In dbSNP:rs13110318.">
    <original>R</original>
    <variation>Q</variation>
    <location>
        <position position="1136"/>
    </location>
</feature>
<feature type="mutagenesis site" description="Substantially reduced RabGAP GTPase hydrolysis activity." evidence="9">
    <original>M</original>
    <variation>A</variation>
    <location>
        <position position="930"/>
    </location>
</feature>
<feature type="mutagenesis site" description="Substantially reduced RabGAP GTPase hydrolysis activity." evidence="9">
    <original>L</original>
    <variation>A</variation>
    <location>
        <position position="1019"/>
    </location>
</feature>
<feature type="sequence conflict" description="In Ref. 3; AAH50321." evidence="12" ref="3">
    <original>Q</original>
    <variation>K</variation>
    <location>
        <position position="730"/>
    </location>
</feature>
<feature type="sequence conflict" description="In Ref. 1; BAH12175." evidence="12" ref="1">
    <original>L</original>
    <variation>H</variation>
    <location>
        <position position="1095"/>
    </location>
</feature>
<feature type="helix" evidence="15">
    <location>
        <begin position="751"/>
        <end position="757"/>
    </location>
</feature>
<feature type="helix" evidence="15">
    <location>
        <begin position="768"/>
        <end position="778"/>
    </location>
</feature>
<feature type="helix" evidence="15">
    <location>
        <begin position="783"/>
        <end position="785"/>
    </location>
</feature>
<feature type="helix" evidence="15">
    <location>
        <begin position="790"/>
        <end position="798"/>
    </location>
</feature>
<feature type="helix" evidence="15">
    <location>
        <begin position="803"/>
        <end position="805"/>
    </location>
</feature>
<feature type="helix" evidence="15">
    <location>
        <begin position="806"/>
        <end position="820"/>
    </location>
</feature>
<feature type="strand" evidence="15">
    <location>
        <begin position="825"/>
        <end position="827"/>
    </location>
</feature>
<feature type="helix" evidence="15">
    <location>
        <begin position="834"/>
        <end position="837"/>
    </location>
</feature>
<feature type="helix" evidence="15">
    <location>
        <begin position="845"/>
        <end position="852"/>
    </location>
</feature>
<feature type="turn" evidence="15">
    <location>
        <begin position="860"/>
        <end position="862"/>
    </location>
</feature>
<feature type="helix" evidence="15">
    <location>
        <begin position="868"/>
        <end position="883"/>
    </location>
</feature>
<feature type="turn" evidence="15">
    <location>
        <begin position="885"/>
        <end position="887"/>
    </location>
</feature>
<feature type="helix" evidence="15">
    <location>
        <begin position="893"/>
        <end position="901"/>
    </location>
</feature>
<feature type="helix" evidence="15">
    <location>
        <begin position="906"/>
        <end position="917"/>
    </location>
</feature>
<feature type="turn" evidence="15">
    <location>
        <begin position="918"/>
        <end position="920"/>
    </location>
</feature>
<feature type="helix" evidence="15">
    <location>
        <begin position="922"/>
        <end position="926"/>
    </location>
</feature>
<feature type="helix" evidence="15">
    <location>
        <begin position="931"/>
        <end position="947"/>
    </location>
</feature>
<feature type="helix" evidence="15">
    <location>
        <begin position="949"/>
        <end position="957"/>
    </location>
</feature>
<feature type="helix" evidence="15">
    <location>
        <begin position="962"/>
        <end position="964"/>
    </location>
</feature>
<feature type="helix" evidence="15">
    <location>
        <begin position="967"/>
        <end position="971"/>
    </location>
</feature>
<feature type="turn" evidence="15">
    <location>
        <begin position="973"/>
        <end position="977"/>
    </location>
</feature>
<feature type="helix" evidence="15">
    <location>
        <begin position="980"/>
        <end position="993"/>
    </location>
</feature>
<feature type="helix" evidence="15">
    <location>
        <begin position="997"/>
        <end position="1008"/>
    </location>
</feature>
<feature type="helix" evidence="15">
    <location>
        <begin position="1010"/>
        <end position="1014"/>
    </location>
</feature>
<feature type="helix" evidence="15">
    <location>
        <begin position="1019"/>
        <end position="1028"/>
    </location>
</feature>
<feature type="turn" evidence="15">
    <location>
        <begin position="1029"/>
        <end position="1031"/>
    </location>
</feature>
<feature type="helix" evidence="15">
    <location>
        <begin position="1035"/>
        <end position="1047"/>
    </location>
</feature>
<feature type="helix" evidence="15">
    <location>
        <begin position="1051"/>
        <end position="1065"/>
    </location>
</feature>
<sequence length="1168" mass="133084">MEPITFTARKHLLSNEVSVDFGLQLVGSLPVHSLTTMPMLPWVVAEVRRLSRQSTRKEPVTKQVRLCVSPSGLRCEPEPGRSQQWDPLIYSSIFECKPQRVHKLIHNSHDPSYFACLIKEDAVHRQSICYVFKADDQTKVPEIISSIRQAGKIARQEELHCPSEFDDTFSKKFEVLFCGRVTVAHKKAPPALIDECIEKFNHVSGSRGSESPRPNPPHAAPTGSQEPVRRPMRKSFSQPGLRSLAFRKELQDGGLRSSGFFSSFEESDIENHLISGHNIVQPTDIEENRTMLFTIGQSEVYLISPDTKKIALEKNFKEISFCSQGIRHVDHFGFICRESSGGGGFHFVCYVFQCTNEALVDEIMMTLKQAFTVAAVQQTAKAPAQLCEGCPLQSLHKLCERIEGMNSSKTKLELQKHLTTLTNQEQATIFEEVQKLRPRNEQRENELIISFLRCLYEEKQKEHIHIGEMKQTSQMAAENIGSELPPSATRFRLDMLKNKAKRSLTESLESILSRGNKARGLQEHSISVDLDSSLSSTLSNTSKEPSVCEKEALPISESSFKLLGSSEDLSSDSESHLPEEPAPLSPQQAFRRRANTLSHFPIECQEPPQPARGSPGVSQRKLMRYHSVSTETPHERKDFESKANHLGDSGGTPVKTRRHSWRQQIFLRVATPQKACDSSSRYEDYSELGELPPRSPLEPVCEDGPFGPPPEEKKRTSRELRELWQKAILQQILLLRMEKENQKLQASENDLLNKRLKLDYEEITPCLKEVTTVWEKMLSTPGRSKIKFDMEKMHSAVGQGVPRHHRGEIWKFLAEQFHLKHQFPSKQQPKDVPYKELLKQLTSQQHAILIDLGRTFPTHPYFSAQLGAGQLSLYNILKAYSLLDQEVGYCQGLSFVAGILLLHMSEEEAFKMLKFLMFDMGLRKQYRPDMIILQIQMYQLSRLLHDYHRDLYNHLEEHEIGPSLYAAPWFLTMFASQFPLGFVARVFDMIFLQGTEVIFKVALSLLGSHKPLILQHENLETIVDFIKSTLPNLGLVQMEKTINQVFEMDIAKQLQAYEVEYHVLQEELIDSSPLSDNQRMDKLEKTNSSLRKQNLDLLEQLQVANGRIQSLEATIEKLLSSESKLKQAMLTLELERSALLQTVEELRRRSAEPSDREPECTQPEPTGD</sequence>
<proteinExistence type="evidence at protein level"/>
<protein>
    <recommendedName>
        <fullName>TBC1 domain family member 1</fullName>
    </recommendedName>
</protein>
<dbReference type="EMBL" id="AK027355">
    <property type="protein sequence ID" value="BAB55057.1"/>
    <property type="status" value="ALT_INIT"/>
    <property type="molecule type" value="mRNA"/>
</dbReference>
<dbReference type="EMBL" id="AK295746">
    <property type="protein sequence ID" value="BAH12175.1"/>
    <property type="molecule type" value="mRNA"/>
</dbReference>
<dbReference type="EMBL" id="AC021106">
    <property type="status" value="NOT_ANNOTATED_CDS"/>
    <property type="molecule type" value="Genomic_DNA"/>
</dbReference>
<dbReference type="EMBL" id="AC098680">
    <property type="status" value="NOT_ANNOTATED_CDS"/>
    <property type="molecule type" value="Genomic_DNA"/>
</dbReference>
<dbReference type="EMBL" id="AC108933">
    <property type="status" value="NOT_ANNOTATED_CDS"/>
    <property type="molecule type" value="Genomic_DNA"/>
</dbReference>
<dbReference type="EMBL" id="BC050321">
    <property type="protein sequence ID" value="AAH50321.3"/>
    <property type="molecule type" value="mRNA"/>
</dbReference>
<dbReference type="EMBL" id="AB029031">
    <property type="protein sequence ID" value="BAA83060.1"/>
    <property type="molecule type" value="mRNA"/>
</dbReference>
<dbReference type="CCDS" id="CCDS33972.1">
    <molecule id="Q86TI0-1"/>
</dbReference>
<dbReference type="CCDS" id="CCDS58897.1">
    <molecule id="Q86TI0-2"/>
</dbReference>
<dbReference type="RefSeq" id="NP_001240841.1">
    <molecule id="Q86TI0-2"/>
    <property type="nucleotide sequence ID" value="NM_001253912.2"/>
</dbReference>
<dbReference type="RefSeq" id="NP_055988.2">
    <molecule id="Q86TI0-1"/>
    <property type="nucleotide sequence ID" value="NM_015173.3"/>
</dbReference>
<dbReference type="RefSeq" id="XP_047305846.1">
    <molecule id="Q86TI0-1"/>
    <property type="nucleotide sequence ID" value="XM_047449890.1"/>
</dbReference>
<dbReference type="RefSeq" id="XP_054205378.1">
    <molecule id="Q86TI0-1"/>
    <property type="nucleotide sequence ID" value="XM_054349403.1"/>
</dbReference>
<dbReference type="PDB" id="3QYE">
    <property type="method" value="X-ray"/>
    <property type="resolution" value="2.20 A"/>
    <property type="chains" value="A/B=746-1072"/>
</dbReference>
<dbReference type="PDBsum" id="3QYE"/>
<dbReference type="SMR" id="Q86TI0"/>
<dbReference type="BioGRID" id="116823">
    <property type="interactions" value="67"/>
</dbReference>
<dbReference type="FunCoup" id="Q86TI0">
    <property type="interactions" value="773"/>
</dbReference>
<dbReference type="IntAct" id="Q86TI0">
    <property type="interactions" value="47"/>
</dbReference>
<dbReference type="MINT" id="Q86TI0"/>
<dbReference type="STRING" id="9606.ENSP00000261439"/>
<dbReference type="TCDB" id="8.A.87.1.4">
    <property type="family name" value="the tbc1 domain (tbc1) family"/>
</dbReference>
<dbReference type="iPTMnet" id="Q86TI0"/>
<dbReference type="PhosphoSitePlus" id="Q86TI0"/>
<dbReference type="BioMuta" id="TBC1D1"/>
<dbReference type="DMDM" id="116242816"/>
<dbReference type="jPOST" id="Q86TI0"/>
<dbReference type="MassIVE" id="Q86TI0"/>
<dbReference type="PaxDb" id="9606-ENSP00000261439"/>
<dbReference type="PeptideAtlas" id="Q86TI0"/>
<dbReference type="ProteomicsDB" id="20323"/>
<dbReference type="ProteomicsDB" id="69696">
    <molecule id="Q86TI0-1"/>
</dbReference>
<dbReference type="Pumba" id="Q86TI0"/>
<dbReference type="Antibodypedia" id="10398">
    <property type="antibodies" value="220 antibodies from 34 providers"/>
</dbReference>
<dbReference type="DNASU" id="23216"/>
<dbReference type="Ensembl" id="ENST00000261439.9">
    <molecule id="Q86TI0-1"/>
    <property type="protein sequence ID" value="ENSP00000261439.4"/>
    <property type="gene ID" value="ENSG00000065882.18"/>
</dbReference>
<dbReference type="Ensembl" id="ENST00000508802.5">
    <molecule id="Q86TI0-2"/>
    <property type="protein sequence ID" value="ENSP00000423651.1"/>
    <property type="gene ID" value="ENSG00000065882.18"/>
</dbReference>
<dbReference type="GeneID" id="23216"/>
<dbReference type="KEGG" id="hsa:23216"/>
<dbReference type="UCSC" id="uc003gtb.4">
    <molecule id="Q86TI0-1"/>
    <property type="organism name" value="human"/>
</dbReference>
<dbReference type="AGR" id="HGNC:11578"/>
<dbReference type="CTD" id="23216"/>
<dbReference type="DisGeNET" id="23216"/>
<dbReference type="GeneCards" id="TBC1D1"/>
<dbReference type="HGNC" id="HGNC:11578">
    <property type="gene designation" value="TBC1D1"/>
</dbReference>
<dbReference type="HPA" id="ENSG00000065882">
    <property type="expression patterns" value="Low tissue specificity"/>
</dbReference>
<dbReference type="MalaCards" id="TBC1D1"/>
<dbReference type="MIM" id="609850">
    <property type="type" value="gene"/>
</dbReference>
<dbReference type="neXtProt" id="NX_Q86TI0"/>
<dbReference type="OpenTargets" id="ENSG00000065882"/>
<dbReference type="PharmGKB" id="PA36342"/>
<dbReference type="VEuPathDB" id="HostDB:ENSG00000065882"/>
<dbReference type="eggNOG" id="KOG4436">
    <property type="taxonomic scope" value="Eukaryota"/>
</dbReference>
<dbReference type="GeneTree" id="ENSGT00940000157949"/>
<dbReference type="InParanoid" id="Q86TI0"/>
<dbReference type="OMA" id="ETPHEQK"/>
<dbReference type="OrthoDB" id="9531327at2759"/>
<dbReference type="PAN-GO" id="Q86TI0">
    <property type="GO annotations" value="2 GO annotations based on evolutionary models"/>
</dbReference>
<dbReference type="PhylomeDB" id="Q86TI0"/>
<dbReference type="TreeFam" id="TF317184"/>
<dbReference type="PathwayCommons" id="Q86TI0"/>
<dbReference type="Reactome" id="R-HSA-1445148">
    <property type="pathway name" value="Translocation of SLC2A4 (GLUT4) to the plasma membrane"/>
</dbReference>
<dbReference type="SignaLink" id="Q86TI0"/>
<dbReference type="SIGNOR" id="Q86TI0"/>
<dbReference type="BioGRID-ORCS" id="23216">
    <property type="hits" value="15 hits in 1163 CRISPR screens"/>
</dbReference>
<dbReference type="ChiTaRS" id="TBC1D1">
    <property type="organism name" value="human"/>
</dbReference>
<dbReference type="EvolutionaryTrace" id="Q86TI0"/>
<dbReference type="GeneWiki" id="TBC1D1"/>
<dbReference type="GenomeRNAi" id="23216"/>
<dbReference type="Pharos" id="Q86TI0">
    <property type="development level" value="Tbio"/>
</dbReference>
<dbReference type="PRO" id="PR:Q86TI0"/>
<dbReference type="Proteomes" id="UP000005640">
    <property type="component" value="Chromosome 4"/>
</dbReference>
<dbReference type="RNAct" id="Q86TI0">
    <property type="molecule type" value="protein"/>
</dbReference>
<dbReference type="Bgee" id="ENSG00000065882">
    <property type="expression patterns" value="Expressed in ventricular zone and 197 other cell types or tissues"/>
</dbReference>
<dbReference type="ExpressionAtlas" id="Q86TI0">
    <property type="expression patterns" value="baseline and differential"/>
</dbReference>
<dbReference type="GO" id="GO:0005794">
    <property type="term" value="C:Golgi apparatus"/>
    <property type="evidence" value="ECO:0000318"/>
    <property type="project" value="GO_Central"/>
</dbReference>
<dbReference type="GO" id="GO:0005634">
    <property type="term" value="C:nucleus"/>
    <property type="evidence" value="ECO:0007669"/>
    <property type="project" value="UniProtKB-SubCell"/>
</dbReference>
<dbReference type="GO" id="GO:0005096">
    <property type="term" value="F:GTPase activator activity"/>
    <property type="evidence" value="ECO:0000318"/>
    <property type="project" value="GO_Central"/>
</dbReference>
<dbReference type="CDD" id="cd00934">
    <property type="entry name" value="PTB"/>
    <property type="match status" value="1"/>
</dbReference>
<dbReference type="CDD" id="cd01269">
    <property type="entry name" value="PTB_TBC1D1_like"/>
    <property type="match status" value="1"/>
</dbReference>
<dbReference type="FunFam" id="1.10.472.80:FF:000003">
    <property type="entry name" value="Putative TBC1 domain family member 1"/>
    <property type="match status" value="1"/>
</dbReference>
<dbReference type="FunFam" id="1.10.8.270:FF:000001">
    <property type="entry name" value="TBC1 domain family member 1"/>
    <property type="match status" value="1"/>
</dbReference>
<dbReference type="FunFam" id="2.30.29.30:FF:000165">
    <property type="entry name" value="TBC1 domain family member 1 isoform X1"/>
    <property type="match status" value="1"/>
</dbReference>
<dbReference type="FunFam" id="1.10.10.2750:FF:000001">
    <property type="entry name" value="TBC1 domain family member 1 isoform X2"/>
    <property type="match status" value="1"/>
</dbReference>
<dbReference type="FunFam" id="2.30.29.30:FF:000076">
    <property type="entry name" value="TBC1 domain family member 4 isoform X1"/>
    <property type="match status" value="1"/>
</dbReference>
<dbReference type="Gene3D" id="1.10.10.2750">
    <property type="match status" value="1"/>
</dbReference>
<dbReference type="Gene3D" id="2.30.29.30">
    <property type="entry name" value="Pleckstrin-homology domain (PH domain)/Phosphotyrosine-binding domain (PTB)"/>
    <property type="match status" value="2"/>
</dbReference>
<dbReference type="Gene3D" id="1.10.8.270">
    <property type="entry name" value="putative rabgap domain of human tbc1 domain family member 14 like domains"/>
    <property type="match status" value="1"/>
</dbReference>
<dbReference type="Gene3D" id="1.10.472.80">
    <property type="entry name" value="Ypt/Rab-GAP domain of gyp1p, domain 3"/>
    <property type="match status" value="1"/>
</dbReference>
<dbReference type="InterPro" id="IPR021785">
    <property type="entry name" value="DUF3350"/>
</dbReference>
<dbReference type="InterPro" id="IPR011993">
    <property type="entry name" value="PH-like_dom_sf"/>
</dbReference>
<dbReference type="InterPro" id="IPR006020">
    <property type="entry name" value="PTB/PI_dom"/>
</dbReference>
<dbReference type="InterPro" id="IPR000195">
    <property type="entry name" value="Rab-GAP-TBC_dom"/>
</dbReference>
<dbReference type="InterPro" id="IPR035969">
    <property type="entry name" value="Rab-GAP_TBC_sf"/>
</dbReference>
<dbReference type="InterPro" id="IPR050302">
    <property type="entry name" value="Rab_GAP_TBC_domain"/>
</dbReference>
<dbReference type="PANTHER" id="PTHR47219">
    <property type="entry name" value="RAB GTPASE-ACTIVATING PROTEIN 1-LIKE"/>
    <property type="match status" value="1"/>
</dbReference>
<dbReference type="PANTHER" id="PTHR47219:SF18">
    <property type="entry name" value="TBC1 DOMAIN FAMILY MEMBER 1 ISOFORM X1"/>
    <property type="match status" value="1"/>
</dbReference>
<dbReference type="Pfam" id="PF11830">
    <property type="entry name" value="DUF3350"/>
    <property type="match status" value="1"/>
</dbReference>
<dbReference type="Pfam" id="PF00640">
    <property type="entry name" value="PID"/>
    <property type="match status" value="1"/>
</dbReference>
<dbReference type="Pfam" id="PF00566">
    <property type="entry name" value="RabGAP-TBC"/>
    <property type="match status" value="1"/>
</dbReference>
<dbReference type="SMART" id="SM00462">
    <property type="entry name" value="PTB"/>
    <property type="match status" value="2"/>
</dbReference>
<dbReference type="SMART" id="SM00164">
    <property type="entry name" value="TBC"/>
    <property type="match status" value="1"/>
</dbReference>
<dbReference type="SUPFAM" id="SSF50729">
    <property type="entry name" value="PH domain-like"/>
    <property type="match status" value="2"/>
</dbReference>
<dbReference type="SUPFAM" id="SSF47923">
    <property type="entry name" value="Ypt/Rab-GAP domain of gyp1p"/>
    <property type="match status" value="2"/>
</dbReference>
<dbReference type="PROSITE" id="PS01179">
    <property type="entry name" value="PID"/>
    <property type="match status" value="1"/>
</dbReference>
<dbReference type="PROSITE" id="PS50086">
    <property type="entry name" value="TBC_RABGAP"/>
    <property type="match status" value="1"/>
</dbReference>
<reference key="1">
    <citation type="journal article" date="2004" name="Nat. Genet.">
        <title>Complete sequencing and characterization of 21,243 full-length human cDNAs.</title>
        <authorList>
            <person name="Ota T."/>
            <person name="Suzuki Y."/>
            <person name="Nishikawa T."/>
            <person name="Otsuki T."/>
            <person name="Sugiyama T."/>
            <person name="Irie R."/>
            <person name="Wakamatsu A."/>
            <person name="Hayashi K."/>
            <person name="Sato H."/>
            <person name="Nagai K."/>
            <person name="Kimura K."/>
            <person name="Makita H."/>
            <person name="Sekine M."/>
            <person name="Obayashi M."/>
            <person name="Nishi T."/>
            <person name="Shibahara T."/>
            <person name="Tanaka T."/>
            <person name="Ishii S."/>
            <person name="Yamamoto J."/>
            <person name="Saito K."/>
            <person name="Kawai Y."/>
            <person name="Isono Y."/>
            <person name="Nakamura Y."/>
            <person name="Nagahari K."/>
            <person name="Murakami K."/>
            <person name="Yasuda T."/>
            <person name="Iwayanagi T."/>
            <person name="Wagatsuma M."/>
            <person name="Shiratori A."/>
            <person name="Sudo H."/>
            <person name="Hosoiri T."/>
            <person name="Kaku Y."/>
            <person name="Kodaira H."/>
            <person name="Kondo H."/>
            <person name="Sugawara M."/>
            <person name="Takahashi M."/>
            <person name="Kanda K."/>
            <person name="Yokoi T."/>
            <person name="Furuya T."/>
            <person name="Kikkawa E."/>
            <person name="Omura Y."/>
            <person name="Abe K."/>
            <person name="Kamihara K."/>
            <person name="Katsuta N."/>
            <person name="Sato K."/>
            <person name="Tanikawa M."/>
            <person name="Yamazaki M."/>
            <person name="Ninomiya K."/>
            <person name="Ishibashi T."/>
            <person name="Yamashita H."/>
            <person name="Murakawa K."/>
            <person name="Fujimori K."/>
            <person name="Tanai H."/>
            <person name="Kimata M."/>
            <person name="Watanabe M."/>
            <person name="Hiraoka S."/>
            <person name="Chiba Y."/>
            <person name="Ishida S."/>
            <person name="Ono Y."/>
            <person name="Takiguchi S."/>
            <person name="Watanabe S."/>
            <person name="Yosida M."/>
            <person name="Hotuta T."/>
            <person name="Kusano J."/>
            <person name="Kanehori K."/>
            <person name="Takahashi-Fujii A."/>
            <person name="Hara H."/>
            <person name="Tanase T.-O."/>
            <person name="Nomura Y."/>
            <person name="Togiya S."/>
            <person name="Komai F."/>
            <person name="Hara R."/>
            <person name="Takeuchi K."/>
            <person name="Arita M."/>
            <person name="Imose N."/>
            <person name="Musashino K."/>
            <person name="Yuuki H."/>
            <person name="Oshima A."/>
            <person name="Sasaki N."/>
            <person name="Aotsuka S."/>
            <person name="Yoshikawa Y."/>
            <person name="Matsunawa H."/>
            <person name="Ichihara T."/>
            <person name="Shiohata N."/>
            <person name="Sano S."/>
            <person name="Moriya S."/>
            <person name="Momiyama H."/>
            <person name="Satoh N."/>
            <person name="Takami S."/>
            <person name="Terashima Y."/>
            <person name="Suzuki O."/>
            <person name="Nakagawa S."/>
            <person name="Senoh A."/>
            <person name="Mizoguchi H."/>
            <person name="Goto Y."/>
            <person name="Shimizu F."/>
            <person name="Wakebe H."/>
            <person name="Hishigaki H."/>
            <person name="Watanabe T."/>
            <person name="Sugiyama A."/>
            <person name="Takemoto M."/>
            <person name="Kawakami B."/>
            <person name="Yamazaki M."/>
            <person name="Watanabe K."/>
            <person name="Kumagai A."/>
            <person name="Itakura S."/>
            <person name="Fukuzumi Y."/>
            <person name="Fujimori Y."/>
            <person name="Komiyama M."/>
            <person name="Tashiro H."/>
            <person name="Tanigami A."/>
            <person name="Fujiwara T."/>
            <person name="Ono T."/>
            <person name="Yamada K."/>
            <person name="Fujii Y."/>
            <person name="Ozaki K."/>
            <person name="Hirao M."/>
            <person name="Ohmori Y."/>
            <person name="Kawabata A."/>
            <person name="Hikiji T."/>
            <person name="Kobatake N."/>
            <person name="Inagaki H."/>
            <person name="Ikema Y."/>
            <person name="Okamoto S."/>
            <person name="Okitani R."/>
            <person name="Kawakami T."/>
            <person name="Noguchi S."/>
            <person name="Itoh T."/>
            <person name="Shigeta K."/>
            <person name="Senba T."/>
            <person name="Matsumura K."/>
            <person name="Nakajima Y."/>
            <person name="Mizuno T."/>
            <person name="Morinaga M."/>
            <person name="Sasaki M."/>
            <person name="Togashi T."/>
            <person name="Oyama M."/>
            <person name="Hata H."/>
            <person name="Watanabe M."/>
            <person name="Komatsu T."/>
            <person name="Mizushima-Sugano J."/>
            <person name="Satoh T."/>
            <person name="Shirai Y."/>
            <person name="Takahashi Y."/>
            <person name="Nakagawa K."/>
            <person name="Okumura K."/>
            <person name="Nagase T."/>
            <person name="Nomura N."/>
            <person name="Kikuchi H."/>
            <person name="Masuho Y."/>
            <person name="Yamashita R."/>
            <person name="Nakai K."/>
            <person name="Yada T."/>
            <person name="Nakamura Y."/>
            <person name="Ohara O."/>
            <person name="Isogai T."/>
            <person name="Sugano S."/>
        </authorList>
    </citation>
    <scope>NUCLEOTIDE SEQUENCE [LARGE SCALE MRNA] (ISOFORM 2)</scope>
    <scope>NUCLEOTIDE SEQUENCE [LARGE SCALE MRNA] OF 482-1168 (ISOFORM 1)</scope>
    <scope>VARIANT PRO-14</scope>
    <source>
        <tissue>Embryo</tissue>
        <tissue>Hippocampus</tissue>
    </source>
</reference>
<reference key="2">
    <citation type="journal article" date="2005" name="Nature">
        <title>Generation and annotation of the DNA sequences of human chromosomes 2 and 4.</title>
        <authorList>
            <person name="Hillier L.W."/>
            <person name="Graves T.A."/>
            <person name="Fulton R.S."/>
            <person name="Fulton L.A."/>
            <person name="Pepin K.H."/>
            <person name="Minx P."/>
            <person name="Wagner-McPherson C."/>
            <person name="Layman D."/>
            <person name="Wylie K."/>
            <person name="Sekhon M."/>
            <person name="Becker M.C."/>
            <person name="Fewell G.A."/>
            <person name="Delehaunty K.D."/>
            <person name="Miner T.L."/>
            <person name="Nash W.E."/>
            <person name="Kremitzki C."/>
            <person name="Oddy L."/>
            <person name="Du H."/>
            <person name="Sun H."/>
            <person name="Bradshaw-Cordum H."/>
            <person name="Ali J."/>
            <person name="Carter J."/>
            <person name="Cordes M."/>
            <person name="Harris A."/>
            <person name="Isak A."/>
            <person name="van Brunt A."/>
            <person name="Nguyen C."/>
            <person name="Du F."/>
            <person name="Courtney L."/>
            <person name="Kalicki J."/>
            <person name="Ozersky P."/>
            <person name="Abbott S."/>
            <person name="Armstrong J."/>
            <person name="Belter E.A."/>
            <person name="Caruso L."/>
            <person name="Cedroni M."/>
            <person name="Cotton M."/>
            <person name="Davidson T."/>
            <person name="Desai A."/>
            <person name="Elliott G."/>
            <person name="Erb T."/>
            <person name="Fronick C."/>
            <person name="Gaige T."/>
            <person name="Haakenson W."/>
            <person name="Haglund K."/>
            <person name="Holmes A."/>
            <person name="Harkins R."/>
            <person name="Kim K."/>
            <person name="Kruchowski S.S."/>
            <person name="Strong C.M."/>
            <person name="Grewal N."/>
            <person name="Goyea E."/>
            <person name="Hou S."/>
            <person name="Levy A."/>
            <person name="Martinka S."/>
            <person name="Mead K."/>
            <person name="McLellan M.D."/>
            <person name="Meyer R."/>
            <person name="Randall-Maher J."/>
            <person name="Tomlinson C."/>
            <person name="Dauphin-Kohlberg S."/>
            <person name="Kozlowicz-Reilly A."/>
            <person name="Shah N."/>
            <person name="Swearengen-Shahid S."/>
            <person name="Snider J."/>
            <person name="Strong J.T."/>
            <person name="Thompson J."/>
            <person name="Yoakum M."/>
            <person name="Leonard S."/>
            <person name="Pearman C."/>
            <person name="Trani L."/>
            <person name="Radionenko M."/>
            <person name="Waligorski J.E."/>
            <person name="Wang C."/>
            <person name="Rock S.M."/>
            <person name="Tin-Wollam A.-M."/>
            <person name="Maupin R."/>
            <person name="Latreille P."/>
            <person name="Wendl M.C."/>
            <person name="Yang S.-P."/>
            <person name="Pohl C."/>
            <person name="Wallis J.W."/>
            <person name="Spieth J."/>
            <person name="Bieri T.A."/>
            <person name="Berkowicz N."/>
            <person name="Nelson J.O."/>
            <person name="Osborne J."/>
            <person name="Ding L."/>
            <person name="Meyer R."/>
            <person name="Sabo A."/>
            <person name="Shotland Y."/>
            <person name="Sinha P."/>
            <person name="Wohldmann P.E."/>
            <person name="Cook L.L."/>
            <person name="Hickenbotham M.T."/>
            <person name="Eldred J."/>
            <person name="Williams D."/>
            <person name="Jones T.A."/>
            <person name="She X."/>
            <person name="Ciccarelli F.D."/>
            <person name="Izaurralde E."/>
            <person name="Taylor J."/>
            <person name="Schmutz J."/>
            <person name="Myers R.M."/>
            <person name="Cox D.R."/>
            <person name="Huang X."/>
            <person name="McPherson J.D."/>
            <person name="Mardis E.R."/>
            <person name="Clifton S.W."/>
            <person name="Warren W.C."/>
            <person name="Chinwalla A.T."/>
            <person name="Eddy S.R."/>
            <person name="Marra M.A."/>
            <person name="Ovcharenko I."/>
            <person name="Furey T.S."/>
            <person name="Miller W."/>
            <person name="Eichler E.E."/>
            <person name="Bork P."/>
            <person name="Suyama M."/>
            <person name="Torrents D."/>
            <person name="Waterston R.H."/>
            <person name="Wilson R.K."/>
        </authorList>
    </citation>
    <scope>NUCLEOTIDE SEQUENCE [LARGE SCALE GENOMIC DNA]</scope>
</reference>
<reference key="3">
    <citation type="journal article" date="2004" name="Genome Res.">
        <title>The status, quality, and expansion of the NIH full-length cDNA project: the Mammalian Gene Collection (MGC).</title>
        <authorList>
            <consortium name="The MGC Project Team"/>
        </authorList>
    </citation>
    <scope>NUCLEOTIDE SEQUENCE [LARGE SCALE MRNA] (ISOFORM 1)</scope>
    <source>
        <tissue>Brain</tissue>
    </source>
</reference>
<reference key="4">
    <citation type="journal article" date="1999" name="DNA Res.">
        <title>Prediction of the coding sequences of unidentified human genes. XIV. The complete sequences of 100 new cDNA clones from brain which code for large proteins in vitro.</title>
        <authorList>
            <person name="Kikuno R."/>
            <person name="Nagase T."/>
            <person name="Ishikawa K."/>
            <person name="Hirosawa M."/>
            <person name="Miyajima N."/>
            <person name="Tanaka A."/>
            <person name="Kotani H."/>
            <person name="Nomura N."/>
            <person name="Ohara O."/>
        </authorList>
    </citation>
    <scope>NUCLEOTIDE SEQUENCE [LARGE SCALE MRNA] OF 406-1168 (ISOFORM 1)</scope>
    <source>
        <tissue>Brain</tissue>
    </source>
</reference>
<reference key="5">
    <citation type="journal article" date="2002" name="DNA Res.">
        <title>Construction of expression-ready cDNA clones for KIAA genes: manual curation of 330 KIAA cDNA clones.</title>
        <authorList>
            <person name="Nakajima D."/>
            <person name="Okazaki N."/>
            <person name="Yamakawa H."/>
            <person name="Kikuno R."/>
            <person name="Ohara O."/>
            <person name="Nagase T."/>
        </authorList>
    </citation>
    <scope>SEQUENCE REVISION</scope>
</reference>
<reference key="6">
    <citation type="journal article" date="2005" name="Nat. Biotechnol.">
        <title>Immunoaffinity profiling of tyrosine phosphorylation in cancer cells.</title>
        <authorList>
            <person name="Rush J."/>
            <person name="Moritz A."/>
            <person name="Lee K.A."/>
            <person name="Guo A."/>
            <person name="Goss V.L."/>
            <person name="Spek E.J."/>
            <person name="Zhang H."/>
            <person name="Zha X.-M."/>
            <person name="Polakiewicz R.D."/>
            <person name="Comb M.J."/>
        </authorList>
    </citation>
    <scope>IDENTIFICATION BY MASS SPECTROMETRY [LARGE SCALE ANALYSIS]</scope>
</reference>
<reference key="7">
    <citation type="journal article" date="2009" name="Sci. Signal.">
        <title>Quantitative phosphoproteomic analysis of T cell receptor signaling reveals system-wide modulation of protein-protein interactions.</title>
        <authorList>
            <person name="Mayya V."/>
            <person name="Lundgren D.H."/>
            <person name="Hwang S.-I."/>
            <person name="Rezaul K."/>
            <person name="Wu L."/>
            <person name="Eng J.K."/>
            <person name="Rodionov V."/>
            <person name="Han D.K."/>
        </authorList>
    </citation>
    <scope>PHOSPHORYLATION [LARGE SCALE ANALYSIS] AT SER-507; SER-565; SER-570 AND SER-585</scope>
    <scope>IDENTIFICATION BY MASS SPECTROMETRY [LARGE SCALE ANALYSIS]</scope>
    <source>
        <tissue>Leukemic T-cell</tissue>
    </source>
</reference>
<reference key="8">
    <citation type="journal article" date="2014" name="Diabetes">
        <title>The adaptor protein APPL2 inhibits insulin-stimulated glucose uptake by interacting with TBC1D1 in skeletal muscle.</title>
        <authorList>
            <person name="Cheng K.K."/>
            <person name="Zhu W."/>
            <person name="Chen B."/>
            <person name="Wang Y."/>
            <person name="Wu D."/>
            <person name="Sweeney G."/>
            <person name="Wang B."/>
            <person name="Lam K.S."/>
            <person name="Xu A."/>
        </authorList>
    </citation>
    <scope>INTERACTION WITH APPL2</scope>
    <scope>PHOSPHORYLATION AT SER-235 AND THR-596</scope>
</reference>
<reference key="9">
    <citation type="journal article" date="2014" name="J. Proteomics">
        <title>An enzyme assisted RP-RPLC approach for in-depth analysis of human liver phosphoproteome.</title>
        <authorList>
            <person name="Bian Y."/>
            <person name="Song C."/>
            <person name="Cheng K."/>
            <person name="Dong M."/>
            <person name="Wang F."/>
            <person name="Huang J."/>
            <person name="Sun D."/>
            <person name="Wang L."/>
            <person name="Ye M."/>
            <person name="Zou H."/>
        </authorList>
    </citation>
    <scope>PHOSPHORYLATION [LARGE SCALE ANALYSIS] AT SER-237 AND SER-585</scope>
    <scope>IDENTIFICATION BY MASS SPECTROMETRY [LARGE SCALE ANALYSIS]</scope>
    <source>
        <tissue>Liver</tissue>
    </source>
</reference>
<reference key="10">
    <citation type="journal article" date="2011" name="J. Biol. Chem.">
        <title>Crystal structures of human TBC1D1 and TBC1D4 (AS160) RabGTPase-activating protein (RabGAP) domains reveal critical elements for GLUT4 translocation.</title>
        <authorList>
            <person name="Park S.Y."/>
            <person name="Jin W."/>
            <person name="Woo J.R."/>
            <person name="Shoelson S.E."/>
        </authorList>
    </citation>
    <scope>X-RAY CRYSTALLOGRAPHY (2.2 ANGSTROMS) OF 750-1072</scope>
    <scope>MUTAGENESIS OF MET-930 AND LEU-1019</scope>
</reference>
<reference key="11">
    <citation type="journal article" date="2006" name="Hum. Mol. Genet.">
        <title>TBC1D1 is a candidate for a severe obesity gene and evidence for a gene/gene interaction in obesity predisposition.</title>
        <authorList>
            <person name="Stone S."/>
            <person name="Abkevich V."/>
            <person name="Russell D.L."/>
            <person name="Riley R."/>
            <person name="Timms K."/>
            <person name="Tran T."/>
            <person name="Trem D."/>
            <person name="Frank D."/>
            <person name="Jammulapati S."/>
            <person name="Neff C.D."/>
            <person name="Iliev D."/>
            <person name="Gress R."/>
            <person name="He G."/>
            <person name="Frech G.C."/>
            <person name="Adams T.D."/>
            <person name="Skolnick M.H."/>
            <person name="Lanchbury J.S."/>
            <person name="Gutin A."/>
            <person name="Hunt S.C."/>
            <person name="Shattuck D."/>
        </authorList>
    </citation>
    <scope>VARIANT TRP-125</scope>
</reference>
<reference key="12">
    <citation type="journal article" date="2008" name="Hum. Mol. Genet.">
        <title>R125W coding variant in TBC1D1 confers risk for familial obesity and contributes to linkage on chromosome 4p14 in the French population.</title>
        <authorList>
            <person name="Meyre D."/>
            <person name="Farge M."/>
            <person name="Lecoeur C."/>
            <person name="Proenca C."/>
            <person name="Durand E."/>
            <person name="Allegaert F."/>
            <person name="Tichet J."/>
            <person name="Marre M."/>
            <person name="Balkau B."/>
            <person name="Weill J."/>
            <person name="Delplanque J."/>
            <person name="Froguel P."/>
        </authorList>
    </citation>
    <scope>VARIANT TRP-125</scope>
</reference>